<comment type="subcellular location">
    <subcellularLocation>
        <location evidence="3">Cell membrane</location>
        <topology evidence="3">Multi-pass membrane protein</topology>
    </subcellularLocation>
</comment>
<comment type="similarity">
    <text evidence="3">Belongs to the UPF0324 family.</text>
</comment>
<reference key="1">
    <citation type="journal article" date="2001" name="Proc. Natl. Acad. Sci. U.S.A.">
        <title>Complete genome sequence of Caulobacter crescentus.</title>
        <authorList>
            <person name="Nierman W.C."/>
            <person name="Feldblyum T.V."/>
            <person name="Laub M.T."/>
            <person name="Paulsen I.T."/>
            <person name="Nelson K.E."/>
            <person name="Eisen J.A."/>
            <person name="Heidelberg J.F."/>
            <person name="Alley M.R.K."/>
            <person name="Ohta N."/>
            <person name="Maddock J.R."/>
            <person name="Potocka I."/>
            <person name="Nelson W.C."/>
            <person name="Newton A."/>
            <person name="Stephens C."/>
            <person name="Phadke N.D."/>
            <person name="Ely B."/>
            <person name="DeBoy R.T."/>
            <person name="Dodson R.J."/>
            <person name="Durkin A.S."/>
            <person name="Gwinn M.L."/>
            <person name="Haft D.H."/>
            <person name="Kolonay J.F."/>
            <person name="Smit J."/>
            <person name="Craven M.B."/>
            <person name="Khouri H.M."/>
            <person name="Shetty J."/>
            <person name="Berry K.J."/>
            <person name="Utterback T.R."/>
            <person name="Tran K."/>
            <person name="Wolf A.M."/>
            <person name="Vamathevan J.J."/>
            <person name="Ermolaeva M.D."/>
            <person name="White O."/>
            <person name="Salzberg S.L."/>
            <person name="Venter J.C."/>
            <person name="Shapiro L."/>
            <person name="Fraser C.M."/>
        </authorList>
    </citation>
    <scope>NUCLEOTIDE SEQUENCE [LARGE SCALE GENOMIC DNA]</scope>
    <source>
        <strain>ATCC 19089 / CIP 103742 / CB 15</strain>
    </source>
</reference>
<feature type="chain" id="PRO_0000157404" description="UPF0324 membrane protein CC_0425">
    <location>
        <begin position="1"/>
        <end position="465"/>
    </location>
</feature>
<feature type="transmembrane region" description="Helical" evidence="1">
    <location>
        <begin position="135"/>
        <end position="157"/>
    </location>
</feature>
<feature type="transmembrane region" description="Helical" evidence="1">
    <location>
        <begin position="172"/>
        <end position="194"/>
    </location>
</feature>
<feature type="transmembrane region" description="Helical" evidence="1">
    <location>
        <begin position="219"/>
        <end position="241"/>
    </location>
</feature>
<feature type="transmembrane region" description="Helical" evidence="1">
    <location>
        <begin position="251"/>
        <end position="273"/>
    </location>
</feature>
<feature type="transmembrane region" description="Helical" evidence="1">
    <location>
        <begin position="286"/>
        <end position="308"/>
    </location>
</feature>
<feature type="transmembrane region" description="Helical" evidence="1">
    <location>
        <begin position="318"/>
        <end position="340"/>
    </location>
</feature>
<feature type="transmembrane region" description="Helical" evidence="1">
    <location>
        <begin position="352"/>
        <end position="374"/>
    </location>
</feature>
<feature type="transmembrane region" description="Helical" evidence="1">
    <location>
        <begin position="378"/>
        <end position="400"/>
    </location>
</feature>
<feature type="transmembrane region" description="Helical" evidence="1">
    <location>
        <begin position="405"/>
        <end position="427"/>
    </location>
</feature>
<feature type="transmembrane region" description="Helical" evidence="1">
    <location>
        <begin position="442"/>
        <end position="464"/>
    </location>
</feature>
<feature type="region of interest" description="Disordered" evidence="2">
    <location>
        <begin position="97"/>
        <end position="132"/>
    </location>
</feature>
<feature type="compositionally biased region" description="Basic residues" evidence="2">
    <location>
        <begin position="115"/>
        <end position="132"/>
    </location>
</feature>
<name>Y425_CAUVC</name>
<evidence type="ECO:0000255" key="1"/>
<evidence type="ECO:0000256" key="2">
    <source>
        <dbReference type="SAM" id="MobiDB-lite"/>
    </source>
</evidence>
<evidence type="ECO:0000305" key="3"/>
<organism>
    <name type="scientific">Caulobacter vibrioides (strain ATCC 19089 / CIP 103742 / CB 15)</name>
    <name type="common">Caulobacter crescentus</name>
    <dbReference type="NCBI Taxonomy" id="190650"/>
    <lineage>
        <taxon>Bacteria</taxon>
        <taxon>Pseudomonadati</taxon>
        <taxon>Pseudomonadota</taxon>
        <taxon>Alphaproteobacteria</taxon>
        <taxon>Caulobacterales</taxon>
        <taxon>Caulobacteraceae</taxon>
        <taxon>Caulobacter</taxon>
    </lineage>
</organism>
<protein>
    <recommendedName>
        <fullName>UPF0324 membrane protein CC_0425</fullName>
    </recommendedName>
</protein>
<sequence>MIKINHLEIRFQGEQNSPYPGNGNLSNNAFLRIRAILERLGFSQRGIHGPVVHASSQIGGRDLRPAHGRGLELWLHPAGRGSGLPHPWRPALRLRAHRQPDRAPPARASEQPLRQGRRALRRRPDQRRHRPRMTAAALRLGAARIGPGLLAGLLMAVLAKLLSQSLHAPAPLLAVVLGMMLGALGLQGQLGAGLDVFAKPGLRLGVAMMGAQISWSEFAALGGPAVLASGAVVLGGLGIGALAGAALGLPLAEALIAAAACSICGASAALAASQAAPSSPENQRTTALVIVGVNLLSTVAMLAYPPIANALGLTAHQAGVFFGLSIHDVAQVAGAGASVSPEVAGTAALAKLSRILWLGPAVVLIGLMLTRTAQGGRISGLQAPPLFVWGFAALAAARGLNLIPPALVSALGACSGFLLLAGVGAISAKLGPKALLEVKPRLAILLVTLTVAVAILAYALTRIFF</sequence>
<proteinExistence type="inferred from homology"/>
<gene>
    <name type="ordered locus">CC_0425</name>
</gene>
<dbReference type="EMBL" id="AE005673">
    <property type="protein sequence ID" value="AAK22412.1"/>
    <property type="molecule type" value="Genomic_DNA"/>
</dbReference>
<dbReference type="PIR" id="H87301">
    <property type="entry name" value="H87301"/>
</dbReference>
<dbReference type="RefSeq" id="NP_419244.1">
    <property type="nucleotide sequence ID" value="NC_002696.2"/>
</dbReference>
<dbReference type="STRING" id="190650.CC_0425"/>
<dbReference type="EnsemblBacteria" id="AAK22412">
    <property type="protein sequence ID" value="AAK22412"/>
    <property type="gene ID" value="CC_0425"/>
</dbReference>
<dbReference type="KEGG" id="ccr:CC_0425"/>
<dbReference type="PATRIC" id="fig|190650.5.peg.429"/>
<dbReference type="eggNOG" id="COG2855">
    <property type="taxonomic scope" value="Bacteria"/>
</dbReference>
<dbReference type="HOGENOM" id="CLU_033541_0_1_5"/>
<dbReference type="BioCyc" id="CAULO:CC0425-MONOMER"/>
<dbReference type="Proteomes" id="UP000001816">
    <property type="component" value="Chromosome"/>
</dbReference>
<dbReference type="GO" id="GO:0005886">
    <property type="term" value="C:plasma membrane"/>
    <property type="evidence" value="ECO:0007669"/>
    <property type="project" value="UniProtKB-SubCell"/>
</dbReference>
<dbReference type="InterPro" id="IPR018383">
    <property type="entry name" value="UPF0324_pro"/>
</dbReference>
<dbReference type="PANTHER" id="PTHR30106">
    <property type="entry name" value="INNER MEMBRANE PROTEIN YEIH-RELATED"/>
    <property type="match status" value="1"/>
</dbReference>
<dbReference type="PANTHER" id="PTHR30106:SF2">
    <property type="entry name" value="UPF0324 INNER MEMBRANE PROTEIN YEIH"/>
    <property type="match status" value="1"/>
</dbReference>
<dbReference type="Pfam" id="PF03601">
    <property type="entry name" value="Cons_hypoth698"/>
    <property type="match status" value="1"/>
</dbReference>
<accession>Q9AB09</accession>
<keyword id="KW-1003">Cell membrane</keyword>
<keyword id="KW-0472">Membrane</keyword>
<keyword id="KW-1185">Reference proteome</keyword>
<keyword id="KW-0812">Transmembrane</keyword>
<keyword id="KW-1133">Transmembrane helix</keyword>